<sequence>MWLQHLSLKTFRNYKETKIDFNPKLNVFLGRNAQGKTNMLEAIYFLALTRSHRTRTDKNLIHFDEEQLHLSGLVQKKTGSIPLEIELTQKGRVTKVNHLKQARLSDYVGHMNVVLFAPEDLQLIKGAPSIRRKFIDMELGQIKPIYLSDLTNYNHILKQRNTYLKSAQKIDETFLSVLDDQLVDYGCRVMNHRLDFIKKLESFGRKKHFELSNQIEELSISYQSSVNITDKQNLSESFKIALEKSRSRDLFKKNTGVGPHRDDISFYINGMDASFGSQGQHRSLVLSIKLAEIELMESITTESPILLLDDVMSELDNTRQLKLLETISQSIQTFITTTSLDHLQNLPENLSIFTIQDGKASVNGN</sequence>
<evidence type="ECO:0000255" key="1">
    <source>
        <dbReference type="HAMAP-Rule" id="MF_00365"/>
    </source>
</evidence>
<evidence type="ECO:0000269" key="2">
    <source>
    </source>
</evidence>
<gene>
    <name evidence="1" type="primary">recF</name>
    <name type="ordered locus">spr2032</name>
</gene>
<reference key="1">
    <citation type="journal article" date="2001" name="J. Bacteriol.">
        <title>Genome of the bacterium Streptococcus pneumoniae strain R6.</title>
        <authorList>
            <person name="Hoskins J."/>
            <person name="Alborn W.E. Jr."/>
            <person name="Arnold J."/>
            <person name="Blaszczak L.C."/>
            <person name="Burgett S."/>
            <person name="DeHoff B.S."/>
            <person name="Estrem S.T."/>
            <person name="Fritz L."/>
            <person name="Fu D.-J."/>
            <person name="Fuller W."/>
            <person name="Geringer C."/>
            <person name="Gilmour R."/>
            <person name="Glass J.S."/>
            <person name="Khoja H."/>
            <person name="Kraft A.R."/>
            <person name="Lagace R.E."/>
            <person name="LeBlanc D.J."/>
            <person name="Lee L.N."/>
            <person name="Lefkowitz E.J."/>
            <person name="Lu J."/>
            <person name="Matsushima P."/>
            <person name="McAhren S.M."/>
            <person name="McHenney M."/>
            <person name="McLeaster K."/>
            <person name="Mundy C.W."/>
            <person name="Nicas T.I."/>
            <person name="Norris F.H."/>
            <person name="O'Gara M."/>
            <person name="Peery R.B."/>
            <person name="Robertson G.T."/>
            <person name="Rockey P."/>
            <person name="Sun P.-M."/>
            <person name="Winkler M.E."/>
            <person name="Yang Y."/>
            <person name="Young-Bellido M."/>
            <person name="Zhao G."/>
            <person name="Zook C.A."/>
            <person name="Baltz R.H."/>
            <person name="Jaskunas S.R."/>
            <person name="Rosteck P.R. Jr."/>
            <person name="Skatrud P.L."/>
            <person name="Glass J.I."/>
        </authorList>
    </citation>
    <scope>NUCLEOTIDE SEQUENCE [LARGE SCALE GENOMIC DNA]</scope>
    <source>
        <strain>ATCC BAA-255 / R6</strain>
    </source>
</reference>
<reference key="2">
    <citation type="journal article" date="2015" name="PLoS Genet.">
        <title>RecFOR is not required for pneumococcal transformation but together with XerS for resolution of chromosome dimers frequently formed in the process.</title>
        <authorList>
            <person name="Johnston C."/>
            <person name="Mortier-Barriere I."/>
            <person name="Granadel C."/>
            <person name="Polard P."/>
            <person name="Martin B."/>
            <person name="Claverys J.P."/>
        </authorList>
    </citation>
    <scope>FUNCTION</scope>
    <scope>DISRUPTION PHENOTYPE</scope>
</reference>
<accession>Q8DMX3</accession>
<protein>
    <recommendedName>
        <fullName evidence="1">DNA replication and repair protein RecF</fullName>
    </recommendedName>
</protein>
<feature type="chain" id="PRO_0000196473" description="DNA replication and repair protein RecF">
    <location>
        <begin position="1"/>
        <end position="365"/>
    </location>
</feature>
<feature type="binding site" evidence="1">
    <location>
        <begin position="30"/>
        <end position="37"/>
    </location>
    <ligand>
        <name>ATP</name>
        <dbReference type="ChEBI" id="CHEBI:30616"/>
    </ligand>
</feature>
<dbReference type="EMBL" id="AE007317">
    <property type="protein sequence ID" value="AAL00834.1"/>
    <property type="molecule type" value="Genomic_DNA"/>
</dbReference>
<dbReference type="PIR" id="E98125">
    <property type="entry name" value="E98125"/>
</dbReference>
<dbReference type="RefSeq" id="NP_359623.1">
    <property type="nucleotide sequence ID" value="NC_003098.1"/>
</dbReference>
<dbReference type="RefSeq" id="WP_000266662.1">
    <property type="nucleotide sequence ID" value="NC_003098.1"/>
</dbReference>
<dbReference type="SMR" id="Q8DMX3"/>
<dbReference type="STRING" id="171101.spr2032"/>
<dbReference type="KEGG" id="spr:spr2032"/>
<dbReference type="PATRIC" id="fig|171101.6.peg.2198"/>
<dbReference type="eggNOG" id="COG1195">
    <property type="taxonomic scope" value="Bacteria"/>
</dbReference>
<dbReference type="HOGENOM" id="CLU_040267_0_1_9"/>
<dbReference type="Proteomes" id="UP000000586">
    <property type="component" value="Chromosome"/>
</dbReference>
<dbReference type="GO" id="GO:0005737">
    <property type="term" value="C:cytoplasm"/>
    <property type="evidence" value="ECO:0007669"/>
    <property type="project" value="UniProtKB-SubCell"/>
</dbReference>
<dbReference type="GO" id="GO:0005524">
    <property type="term" value="F:ATP binding"/>
    <property type="evidence" value="ECO:0007669"/>
    <property type="project" value="UniProtKB-UniRule"/>
</dbReference>
<dbReference type="GO" id="GO:0003697">
    <property type="term" value="F:single-stranded DNA binding"/>
    <property type="evidence" value="ECO:0007669"/>
    <property type="project" value="UniProtKB-UniRule"/>
</dbReference>
<dbReference type="GO" id="GO:0006260">
    <property type="term" value="P:DNA replication"/>
    <property type="evidence" value="ECO:0007669"/>
    <property type="project" value="UniProtKB-UniRule"/>
</dbReference>
<dbReference type="GO" id="GO:0000731">
    <property type="term" value="P:DNA synthesis involved in DNA repair"/>
    <property type="evidence" value="ECO:0000318"/>
    <property type="project" value="GO_Central"/>
</dbReference>
<dbReference type="GO" id="GO:0006302">
    <property type="term" value="P:double-strand break repair"/>
    <property type="evidence" value="ECO:0000318"/>
    <property type="project" value="GO_Central"/>
</dbReference>
<dbReference type="GO" id="GO:0009432">
    <property type="term" value="P:SOS response"/>
    <property type="evidence" value="ECO:0007669"/>
    <property type="project" value="UniProtKB-UniRule"/>
</dbReference>
<dbReference type="CDD" id="cd03242">
    <property type="entry name" value="ABC_RecF"/>
    <property type="match status" value="1"/>
</dbReference>
<dbReference type="FunFam" id="1.20.1050.90:FF:000002">
    <property type="entry name" value="DNA replication and repair protein RecF"/>
    <property type="match status" value="1"/>
</dbReference>
<dbReference type="Gene3D" id="3.40.50.300">
    <property type="entry name" value="P-loop containing nucleotide triphosphate hydrolases"/>
    <property type="match status" value="1"/>
</dbReference>
<dbReference type="Gene3D" id="1.20.1050.90">
    <property type="entry name" value="RecF/RecN/SMC, N-terminal domain"/>
    <property type="match status" value="1"/>
</dbReference>
<dbReference type="HAMAP" id="MF_00365">
    <property type="entry name" value="RecF"/>
    <property type="match status" value="1"/>
</dbReference>
<dbReference type="InterPro" id="IPR001238">
    <property type="entry name" value="DNA-binding_RecF"/>
</dbReference>
<dbReference type="InterPro" id="IPR018078">
    <property type="entry name" value="DNA-binding_RecF_CS"/>
</dbReference>
<dbReference type="InterPro" id="IPR027417">
    <property type="entry name" value="P-loop_NTPase"/>
</dbReference>
<dbReference type="InterPro" id="IPR003395">
    <property type="entry name" value="RecF/RecN/SMC_N"/>
</dbReference>
<dbReference type="InterPro" id="IPR042174">
    <property type="entry name" value="RecF_2"/>
</dbReference>
<dbReference type="NCBIfam" id="TIGR00611">
    <property type="entry name" value="recf"/>
    <property type="match status" value="1"/>
</dbReference>
<dbReference type="PANTHER" id="PTHR32182">
    <property type="entry name" value="DNA REPLICATION AND REPAIR PROTEIN RECF"/>
    <property type="match status" value="1"/>
</dbReference>
<dbReference type="PANTHER" id="PTHR32182:SF0">
    <property type="entry name" value="DNA REPLICATION AND REPAIR PROTEIN RECF"/>
    <property type="match status" value="1"/>
</dbReference>
<dbReference type="Pfam" id="PF02463">
    <property type="entry name" value="SMC_N"/>
    <property type="match status" value="1"/>
</dbReference>
<dbReference type="SUPFAM" id="SSF52540">
    <property type="entry name" value="P-loop containing nucleoside triphosphate hydrolases"/>
    <property type="match status" value="1"/>
</dbReference>
<dbReference type="PROSITE" id="PS00617">
    <property type="entry name" value="RECF_1"/>
    <property type="match status" value="1"/>
</dbReference>
<dbReference type="PROSITE" id="PS00618">
    <property type="entry name" value="RECF_2"/>
    <property type="match status" value="1"/>
</dbReference>
<comment type="function">
    <text evidence="1 2">The RecF protein is involved in DNA metabolism; it is required for DNA replication and normal SOS inducibility. RecF binds preferentially to single-stranded, linear DNA. It also seems to bind ATP (By similarity). Plays no role in chromosomal or plasmid transformation but is required for resolution of chromosome dimers occurring as intermediates in the formation of merodiploids by transformation (PubMed:25569614).</text>
</comment>
<comment type="subcellular location">
    <subcellularLocation>
        <location evidence="1">Cytoplasm</location>
    </subcellularLocation>
</comment>
<comment type="disruption phenotype">
    <text evidence="2">Mutant is sensitive to the alkylating agent methyl methanesulfonate and the DNA cross-linking agent mitomycin C.</text>
</comment>
<comment type="similarity">
    <text evidence="1">Belongs to the RecF family.</text>
</comment>
<name>RECF_STRR6</name>
<proteinExistence type="inferred from homology"/>
<keyword id="KW-0067">ATP-binding</keyword>
<keyword id="KW-0963">Cytoplasm</keyword>
<keyword id="KW-0227">DNA damage</keyword>
<keyword id="KW-0234">DNA repair</keyword>
<keyword id="KW-0235">DNA replication</keyword>
<keyword id="KW-0238">DNA-binding</keyword>
<keyword id="KW-0547">Nucleotide-binding</keyword>
<keyword id="KW-1185">Reference proteome</keyword>
<keyword id="KW-0742">SOS response</keyword>
<organism>
    <name type="scientific">Streptococcus pneumoniae (strain ATCC BAA-255 / R6)</name>
    <dbReference type="NCBI Taxonomy" id="171101"/>
    <lineage>
        <taxon>Bacteria</taxon>
        <taxon>Bacillati</taxon>
        <taxon>Bacillota</taxon>
        <taxon>Bacilli</taxon>
        <taxon>Lactobacillales</taxon>
        <taxon>Streptococcaceae</taxon>
        <taxon>Streptococcus</taxon>
    </lineage>
</organism>